<keyword id="KW-1035">Host cytoplasm</keyword>
<keyword id="KW-1040">Host Golgi apparatus</keyword>
<keyword id="KW-1048">Host nucleus</keyword>
<keyword id="KW-1185">Reference proteome</keyword>
<keyword id="KW-0946">Virion</keyword>
<keyword id="KW-0920">Virion tegument</keyword>
<evidence type="ECO:0000255" key="1">
    <source>
        <dbReference type="HAMAP-Rule" id="MF_04043"/>
    </source>
</evidence>
<name>ITP_HHV7J</name>
<reference key="1">
    <citation type="journal article" date="1996" name="J. Virol.">
        <title>Determination and analysis of the complete nucleotide sequence of human herpesvirus.</title>
        <authorList>
            <person name="Nicholas J."/>
        </authorList>
    </citation>
    <scope>NUCLEOTIDE SEQUENCE [LARGE SCALE GENOMIC DNA]</scope>
</reference>
<gene>
    <name type="primary">U30</name>
</gene>
<organism>
    <name type="scientific">Human herpesvirus 7 (strain JI)</name>
    <name type="common">HHV-7</name>
    <name type="synonym">Human T lymphotropic virus</name>
    <dbReference type="NCBI Taxonomy" id="57278"/>
    <lineage>
        <taxon>Viruses</taxon>
        <taxon>Duplodnaviria</taxon>
        <taxon>Heunggongvirae</taxon>
        <taxon>Peploviricota</taxon>
        <taxon>Herviviricetes</taxon>
        <taxon>Herpesvirales</taxon>
        <taxon>Orthoherpesviridae</taxon>
        <taxon>Betaherpesvirinae</taxon>
        <taxon>Roseolovirus</taxon>
        <taxon>Roseolovirus humanbeta7</taxon>
        <taxon>Human betaherpesvirus 7</taxon>
    </lineage>
</organism>
<proteinExistence type="inferred from homology"/>
<comment type="function">
    <text evidence="1">Plays an essential role in cytoplasmic secondary envelopment during viral egress. Interacts with the capsid via the large tegument protein/LTP and participates in its transport to the host trans-Golgi network (TGN) where secondary envelopment occurs. Modulates tegumentation and capsid accumulation at the viral assembly complex.</text>
</comment>
<comment type="subunit">
    <text evidence="1">Interacts (via C-terminus) with the large tegument protein/LTP (via N-terminus).</text>
</comment>
<comment type="subcellular location">
    <subcellularLocation>
        <location evidence="1">Virion tegument</location>
    </subcellularLocation>
    <subcellularLocation>
        <location evidence="1">Host cytoplasm</location>
    </subcellularLocation>
    <subcellularLocation>
        <location evidence="1">Host nucleus</location>
    </subcellularLocation>
    <subcellularLocation>
        <location evidence="1">Host Golgi apparatus</location>
        <location evidence="1">Host trans-Golgi network</location>
    </subcellularLocation>
</comment>
<comment type="similarity">
    <text evidence="1">Belongs to the herpesviridae inner tegument protein family.</text>
</comment>
<sequence length="938" mass="110171">MDCTNLQFESILNLLKTDVSDNTFLTITAKIEIFSLAAESITADKILSFAKLLPIHNYHFNFIKNHMVFYILNYSTLGFAKRFSIAETLCRELKIFHRTFQSTSKLQNLNNAEVLYQFEKLIESIQVFKAELASPIGKLLRQETMIYDKPTEKSVKYVIIQQNLIKINNLIQDCESIKNCRLIAELIDELYQKVYRWFMQIFTYDDIIFPNDNFLDRLLKMDFCYTYYTASNQHLLSLFEQTIDNQIFIDPSPYFEINPVYSPELQFMSTFSLKIFSKNISAKNEDLYIYPLLKTNFSILTFLSLENIFFHHGFIYHILHRTNITPTEEKKLGKINGFLNTVIQQVLIKKNNLQITFPELLDKIYHLHRIGLNIETAQIFLQMLTTYKPATTNNKLQTFFTNFSIIIFSAYIFFLCIELFSPTFIFHNKKKLILEKQKSIILILGEQFSFIWKEVNEIVDLLFSSTVTETYFKFYSKGADDYEKDFLYKDLMEKWGELFFPLTYSMTTPQKYTDKHVSSTVLKNLCDTAYQSKMETAYESLLPYITHPEFKFIFITHYVRPSLSLITNLTFEEIKDNRRLLILIFACKLLMPSNYLLSHYLLLLHAFTLQIFKVDLGHFSIIHAITQKIFDNINSLTQTIFIPKTNFLVSLLLTAYTVHMQTYVNPWIQKTISENIALLKEYIDFTKKCSSTLATTCYLNLENFAVNMYFGKNKVGSTSLSAFYRTCSKLIEESKLFKDRLQEIKVSKTLFIEMLQNVVKNITKFKDLVSNQTLQNFIIIVERISSHANTTYQDVLNSIDECHFSNMQLIQSFKNIVYVIDVLNTKNIFNFSLASQLIEAKKLVKKQDTYNQLNVQDDFVTVLKSHLNNLFEKQKPTINIERRFMLEGIPDIKQIPFLDVFDERYRLIPQIEKYLHWYIAYSEAAQADLVEPLLLKLG</sequence>
<organismHost>
    <name type="scientific">Homo sapiens</name>
    <name type="common">Human</name>
    <dbReference type="NCBI Taxonomy" id="9606"/>
</organismHost>
<dbReference type="EMBL" id="U43400">
    <property type="protein sequence ID" value="AAC54692.1"/>
    <property type="molecule type" value="Genomic_DNA"/>
</dbReference>
<dbReference type="PIR" id="T41932">
    <property type="entry name" value="T41932"/>
</dbReference>
<dbReference type="RefSeq" id="YP_073770.1">
    <property type="nucleotide sequence ID" value="NC_001716.2"/>
</dbReference>
<dbReference type="SMR" id="P52438"/>
<dbReference type="GeneID" id="3289488"/>
<dbReference type="KEGG" id="vg:3289488"/>
<dbReference type="Proteomes" id="UP000009246">
    <property type="component" value="Segment"/>
</dbReference>
<dbReference type="GO" id="GO:0044177">
    <property type="term" value="C:host cell Golgi apparatus"/>
    <property type="evidence" value="ECO:0007669"/>
    <property type="project" value="UniProtKB-SubCell"/>
</dbReference>
<dbReference type="GO" id="GO:0042025">
    <property type="term" value="C:host cell nucleus"/>
    <property type="evidence" value="ECO:0007669"/>
    <property type="project" value="UniProtKB-SubCell"/>
</dbReference>
<dbReference type="GO" id="GO:0019033">
    <property type="term" value="C:viral tegument"/>
    <property type="evidence" value="ECO:0007669"/>
    <property type="project" value="UniProtKB-SubCell"/>
</dbReference>
<dbReference type="GO" id="GO:0019068">
    <property type="term" value="P:virion assembly"/>
    <property type="evidence" value="ECO:0007669"/>
    <property type="project" value="InterPro"/>
</dbReference>
<dbReference type="HAMAP" id="MF_04043">
    <property type="entry name" value="HSV_ITP"/>
    <property type="match status" value="1"/>
</dbReference>
<dbReference type="InterPro" id="IPR007611">
    <property type="entry name" value="Herpes_U30"/>
</dbReference>
<dbReference type="InterPro" id="IPR034738">
    <property type="entry name" value="HSV_ITP"/>
</dbReference>
<dbReference type="Pfam" id="PF04523">
    <property type="entry name" value="Herpes_U30"/>
    <property type="match status" value="1"/>
</dbReference>
<feature type="chain" id="PRO_0000116049" description="Inner tegument protein">
    <location>
        <begin position="1"/>
        <end position="938"/>
    </location>
</feature>
<feature type="region of interest" description="Interaction with large tegument protein" evidence="1">
    <location>
        <begin position="457"/>
        <end position="938"/>
    </location>
</feature>
<accession>P52438</accession>
<protein>
    <recommendedName>
        <fullName evidence="1">Inner tegument protein</fullName>
    </recommendedName>
</protein>